<protein>
    <recommendedName>
        <fullName evidence="1">Serine--tRNA ligase</fullName>
        <ecNumber evidence="1">6.1.1.11</ecNumber>
    </recommendedName>
    <alternativeName>
        <fullName evidence="1">Seryl-tRNA synthetase</fullName>
        <shortName evidence="1">SerRS</shortName>
    </alternativeName>
    <alternativeName>
        <fullName evidence="1">Seryl-tRNA(Ser/Sec) synthetase</fullName>
    </alternativeName>
</protein>
<dbReference type="EC" id="6.1.1.11" evidence="1"/>
<dbReference type="EMBL" id="AP008232">
    <property type="protein sequence ID" value="BAE74386.1"/>
    <property type="molecule type" value="Genomic_DNA"/>
</dbReference>
<dbReference type="RefSeq" id="WP_011410745.1">
    <property type="nucleotide sequence ID" value="NC_007712.1"/>
</dbReference>
<dbReference type="SMR" id="Q2NTY9"/>
<dbReference type="STRING" id="343509.SG1111"/>
<dbReference type="KEGG" id="sgl:SG1111"/>
<dbReference type="eggNOG" id="COG0172">
    <property type="taxonomic scope" value="Bacteria"/>
</dbReference>
<dbReference type="HOGENOM" id="CLU_023797_1_1_6"/>
<dbReference type="OrthoDB" id="9804647at2"/>
<dbReference type="BioCyc" id="SGLO343509:SGP1_RS09530-MONOMER"/>
<dbReference type="UniPathway" id="UPA00906">
    <property type="reaction ID" value="UER00895"/>
</dbReference>
<dbReference type="Proteomes" id="UP000001932">
    <property type="component" value="Chromosome"/>
</dbReference>
<dbReference type="GO" id="GO:0005737">
    <property type="term" value="C:cytoplasm"/>
    <property type="evidence" value="ECO:0007669"/>
    <property type="project" value="UniProtKB-SubCell"/>
</dbReference>
<dbReference type="GO" id="GO:0005524">
    <property type="term" value="F:ATP binding"/>
    <property type="evidence" value="ECO:0007669"/>
    <property type="project" value="UniProtKB-UniRule"/>
</dbReference>
<dbReference type="GO" id="GO:0004828">
    <property type="term" value="F:serine-tRNA ligase activity"/>
    <property type="evidence" value="ECO:0007669"/>
    <property type="project" value="UniProtKB-UniRule"/>
</dbReference>
<dbReference type="GO" id="GO:0016260">
    <property type="term" value="P:selenocysteine biosynthetic process"/>
    <property type="evidence" value="ECO:0007669"/>
    <property type="project" value="UniProtKB-UniRule"/>
</dbReference>
<dbReference type="GO" id="GO:0006434">
    <property type="term" value="P:seryl-tRNA aminoacylation"/>
    <property type="evidence" value="ECO:0007669"/>
    <property type="project" value="UniProtKB-UniRule"/>
</dbReference>
<dbReference type="CDD" id="cd00770">
    <property type="entry name" value="SerRS_core"/>
    <property type="match status" value="1"/>
</dbReference>
<dbReference type="FunFam" id="3.30.930.10:FF:000018">
    <property type="entry name" value="Serine--tRNA ligase"/>
    <property type="match status" value="1"/>
</dbReference>
<dbReference type="Gene3D" id="3.30.930.10">
    <property type="entry name" value="Bira Bifunctional Protein, Domain 2"/>
    <property type="match status" value="1"/>
</dbReference>
<dbReference type="Gene3D" id="1.10.287.40">
    <property type="entry name" value="Serine-tRNA synthetase, tRNA binding domain"/>
    <property type="match status" value="1"/>
</dbReference>
<dbReference type="HAMAP" id="MF_00176">
    <property type="entry name" value="Ser_tRNA_synth_type1"/>
    <property type="match status" value="1"/>
</dbReference>
<dbReference type="InterPro" id="IPR002314">
    <property type="entry name" value="aa-tRNA-synt_IIb"/>
</dbReference>
<dbReference type="InterPro" id="IPR006195">
    <property type="entry name" value="aa-tRNA-synth_II"/>
</dbReference>
<dbReference type="InterPro" id="IPR045864">
    <property type="entry name" value="aa-tRNA-synth_II/BPL/LPL"/>
</dbReference>
<dbReference type="InterPro" id="IPR002317">
    <property type="entry name" value="Ser-tRNA-ligase_type_1"/>
</dbReference>
<dbReference type="InterPro" id="IPR015866">
    <property type="entry name" value="Ser-tRNA-synth_1_N"/>
</dbReference>
<dbReference type="InterPro" id="IPR042103">
    <property type="entry name" value="SerRS_1_N_sf"/>
</dbReference>
<dbReference type="InterPro" id="IPR033729">
    <property type="entry name" value="SerRS_core"/>
</dbReference>
<dbReference type="InterPro" id="IPR010978">
    <property type="entry name" value="tRNA-bd_arm"/>
</dbReference>
<dbReference type="NCBIfam" id="TIGR00414">
    <property type="entry name" value="serS"/>
    <property type="match status" value="1"/>
</dbReference>
<dbReference type="PANTHER" id="PTHR43697:SF1">
    <property type="entry name" value="SERINE--TRNA LIGASE"/>
    <property type="match status" value="1"/>
</dbReference>
<dbReference type="PANTHER" id="PTHR43697">
    <property type="entry name" value="SERYL-TRNA SYNTHETASE"/>
    <property type="match status" value="1"/>
</dbReference>
<dbReference type="Pfam" id="PF02403">
    <property type="entry name" value="Seryl_tRNA_N"/>
    <property type="match status" value="1"/>
</dbReference>
<dbReference type="Pfam" id="PF00587">
    <property type="entry name" value="tRNA-synt_2b"/>
    <property type="match status" value="1"/>
</dbReference>
<dbReference type="PIRSF" id="PIRSF001529">
    <property type="entry name" value="Ser-tRNA-synth_IIa"/>
    <property type="match status" value="1"/>
</dbReference>
<dbReference type="PRINTS" id="PR00981">
    <property type="entry name" value="TRNASYNTHSER"/>
</dbReference>
<dbReference type="SUPFAM" id="SSF55681">
    <property type="entry name" value="Class II aaRS and biotin synthetases"/>
    <property type="match status" value="1"/>
</dbReference>
<dbReference type="SUPFAM" id="SSF46589">
    <property type="entry name" value="tRNA-binding arm"/>
    <property type="match status" value="1"/>
</dbReference>
<dbReference type="PROSITE" id="PS50862">
    <property type="entry name" value="AA_TRNA_LIGASE_II"/>
    <property type="match status" value="1"/>
</dbReference>
<gene>
    <name evidence="1" type="primary">serS</name>
    <name type="ordered locus">SG1111</name>
</gene>
<sequence length="430" mass="48688">MLDPNLLRNELDAVAEKLARRKFKLDVATLRQHEERRKVLQVETENLQAERNARSKAIGAAKSRGEDIEPLRREVNQLGERLSSAKTELDALQSEIRDYAFSLPNIPDDDVPDGRDENDNQEVSRWGEPRQYDFPIRDHVELGEIAGGLDFAAAVKLTGARFVVMRGQIARLHRALTQFMLDLHTEQHGYVEHYLPYLVNHASLYGTGQLPKFVEDLFHTQPLNEEADTSAYALIPTAEVPLTNLIRDEIIEEDALPLKMTAHTPCFRSEAGSYGRDTRGLIRMHQFDKVEMVQVVKPAQSMQALEEMTSHAEKVLQLLQLPYRKVLLCNGDMAFASCKTYDLEVWLPAQNTYREISSCSNISDFQARRMQARYRSRTDKKPQLVHTLNGSGLAVGRTLVAVLENHQLADGRIAIPAVLQPYMKGLTHIG</sequence>
<reference key="1">
    <citation type="journal article" date="2006" name="Genome Res.">
        <title>Massive genome erosion and functional adaptations provide insights into the symbiotic lifestyle of Sodalis glossinidius in the tsetse host.</title>
        <authorList>
            <person name="Toh H."/>
            <person name="Weiss B.L."/>
            <person name="Perkin S.A.H."/>
            <person name="Yamashita A."/>
            <person name="Oshima K."/>
            <person name="Hattori M."/>
            <person name="Aksoy S."/>
        </authorList>
    </citation>
    <scope>NUCLEOTIDE SEQUENCE [LARGE SCALE GENOMIC DNA]</scope>
    <source>
        <strain>morsitans</strain>
    </source>
</reference>
<keyword id="KW-0030">Aminoacyl-tRNA synthetase</keyword>
<keyword id="KW-0067">ATP-binding</keyword>
<keyword id="KW-0963">Cytoplasm</keyword>
<keyword id="KW-0436">Ligase</keyword>
<keyword id="KW-0547">Nucleotide-binding</keyword>
<keyword id="KW-0648">Protein biosynthesis</keyword>
<organism>
    <name type="scientific">Sodalis glossinidius (strain morsitans)</name>
    <dbReference type="NCBI Taxonomy" id="343509"/>
    <lineage>
        <taxon>Bacteria</taxon>
        <taxon>Pseudomonadati</taxon>
        <taxon>Pseudomonadota</taxon>
        <taxon>Gammaproteobacteria</taxon>
        <taxon>Enterobacterales</taxon>
        <taxon>Bruguierivoracaceae</taxon>
        <taxon>Sodalis</taxon>
    </lineage>
</organism>
<accession>Q2NTY9</accession>
<feature type="chain" id="PRO_1000019825" description="Serine--tRNA ligase">
    <location>
        <begin position="1"/>
        <end position="430"/>
    </location>
</feature>
<feature type="region of interest" description="Disordered" evidence="2">
    <location>
        <begin position="103"/>
        <end position="127"/>
    </location>
</feature>
<feature type="binding site" evidence="1">
    <location>
        <begin position="237"/>
        <end position="239"/>
    </location>
    <ligand>
        <name>L-serine</name>
        <dbReference type="ChEBI" id="CHEBI:33384"/>
    </ligand>
</feature>
<feature type="binding site" evidence="1">
    <location>
        <begin position="268"/>
        <end position="270"/>
    </location>
    <ligand>
        <name>ATP</name>
        <dbReference type="ChEBI" id="CHEBI:30616"/>
    </ligand>
</feature>
<feature type="binding site" evidence="1">
    <location>
        <position position="291"/>
    </location>
    <ligand>
        <name>L-serine</name>
        <dbReference type="ChEBI" id="CHEBI:33384"/>
    </ligand>
</feature>
<feature type="binding site" evidence="1">
    <location>
        <begin position="355"/>
        <end position="358"/>
    </location>
    <ligand>
        <name>ATP</name>
        <dbReference type="ChEBI" id="CHEBI:30616"/>
    </ligand>
</feature>
<feature type="binding site" evidence="1">
    <location>
        <position position="391"/>
    </location>
    <ligand>
        <name>L-serine</name>
        <dbReference type="ChEBI" id="CHEBI:33384"/>
    </ligand>
</feature>
<name>SYS_SODGM</name>
<comment type="function">
    <text evidence="1">Catalyzes the attachment of serine to tRNA(Ser). Is also able to aminoacylate tRNA(Sec) with serine, to form the misacylated tRNA L-seryl-tRNA(Sec), which will be further converted into selenocysteinyl-tRNA(Sec).</text>
</comment>
<comment type="catalytic activity">
    <reaction evidence="1">
        <text>tRNA(Ser) + L-serine + ATP = L-seryl-tRNA(Ser) + AMP + diphosphate + H(+)</text>
        <dbReference type="Rhea" id="RHEA:12292"/>
        <dbReference type="Rhea" id="RHEA-COMP:9669"/>
        <dbReference type="Rhea" id="RHEA-COMP:9703"/>
        <dbReference type="ChEBI" id="CHEBI:15378"/>
        <dbReference type="ChEBI" id="CHEBI:30616"/>
        <dbReference type="ChEBI" id="CHEBI:33019"/>
        <dbReference type="ChEBI" id="CHEBI:33384"/>
        <dbReference type="ChEBI" id="CHEBI:78442"/>
        <dbReference type="ChEBI" id="CHEBI:78533"/>
        <dbReference type="ChEBI" id="CHEBI:456215"/>
        <dbReference type="EC" id="6.1.1.11"/>
    </reaction>
</comment>
<comment type="catalytic activity">
    <reaction evidence="1">
        <text>tRNA(Sec) + L-serine + ATP = L-seryl-tRNA(Sec) + AMP + diphosphate + H(+)</text>
        <dbReference type="Rhea" id="RHEA:42580"/>
        <dbReference type="Rhea" id="RHEA-COMP:9742"/>
        <dbReference type="Rhea" id="RHEA-COMP:10128"/>
        <dbReference type="ChEBI" id="CHEBI:15378"/>
        <dbReference type="ChEBI" id="CHEBI:30616"/>
        <dbReference type="ChEBI" id="CHEBI:33019"/>
        <dbReference type="ChEBI" id="CHEBI:33384"/>
        <dbReference type="ChEBI" id="CHEBI:78442"/>
        <dbReference type="ChEBI" id="CHEBI:78533"/>
        <dbReference type="ChEBI" id="CHEBI:456215"/>
        <dbReference type="EC" id="6.1.1.11"/>
    </reaction>
</comment>
<comment type="pathway">
    <text evidence="1">Aminoacyl-tRNA biosynthesis; selenocysteinyl-tRNA(Sec) biosynthesis; L-seryl-tRNA(Sec) from L-serine and tRNA(Sec): step 1/1.</text>
</comment>
<comment type="subunit">
    <text evidence="1">Homodimer. The tRNA molecule binds across the dimer.</text>
</comment>
<comment type="subcellular location">
    <subcellularLocation>
        <location evidence="1">Cytoplasm</location>
    </subcellularLocation>
</comment>
<comment type="domain">
    <text evidence="1">Consists of two distinct domains, a catalytic core and a N-terminal extension that is involved in tRNA binding.</text>
</comment>
<comment type="similarity">
    <text evidence="1">Belongs to the class-II aminoacyl-tRNA synthetase family. Type-1 seryl-tRNA synthetase subfamily.</text>
</comment>
<evidence type="ECO:0000255" key="1">
    <source>
        <dbReference type="HAMAP-Rule" id="MF_00176"/>
    </source>
</evidence>
<evidence type="ECO:0000256" key="2">
    <source>
        <dbReference type="SAM" id="MobiDB-lite"/>
    </source>
</evidence>
<proteinExistence type="inferred from homology"/>